<organism>
    <name type="scientific">Haemophilus influenzae (strain ATCC 51907 / DSM 11121 / KW20 / Rd)</name>
    <dbReference type="NCBI Taxonomy" id="71421"/>
    <lineage>
        <taxon>Bacteria</taxon>
        <taxon>Pseudomonadati</taxon>
        <taxon>Pseudomonadota</taxon>
        <taxon>Gammaproteobacteria</taxon>
        <taxon>Pasteurellales</taxon>
        <taxon>Pasteurellaceae</taxon>
        <taxon>Haemophilus</taxon>
    </lineage>
</organism>
<proteinExistence type="inferred from homology"/>
<dbReference type="EC" id="1.5.1.3"/>
<dbReference type="EMBL" id="L42023">
    <property type="protein sequence ID" value="AAC22559.1"/>
    <property type="molecule type" value="Genomic_DNA"/>
</dbReference>
<dbReference type="EMBL" id="X84207">
    <property type="protein sequence ID" value="CAA58993.1"/>
    <property type="molecule type" value="Genomic_DNA"/>
</dbReference>
<dbReference type="EMBL" id="X84205">
    <property type="protein sequence ID" value="CAA58991.1"/>
    <property type="molecule type" value="Genomic_DNA"/>
</dbReference>
<dbReference type="EMBL" id="X84206">
    <property type="protein sequence ID" value="CAA58992.1"/>
    <property type="molecule type" value="Genomic_DNA"/>
</dbReference>
<dbReference type="PIR" id="C64101">
    <property type="entry name" value="C64101"/>
</dbReference>
<dbReference type="PIR" id="S52336">
    <property type="entry name" value="S52336"/>
</dbReference>
<dbReference type="PIR" id="S52337">
    <property type="entry name" value="S52337"/>
</dbReference>
<dbReference type="PIR" id="S52338">
    <property type="entry name" value="S52338"/>
</dbReference>
<dbReference type="RefSeq" id="NP_439060.1">
    <property type="nucleotide sequence ID" value="NC_000907.1"/>
</dbReference>
<dbReference type="SMR" id="P43791"/>
<dbReference type="STRING" id="71421.HI_0899"/>
<dbReference type="EnsemblBacteria" id="AAC22559">
    <property type="protein sequence ID" value="AAC22559"/>
    <property type="gene ID" value="HI_0899"/>
</dbReference>
<dbReference type="KEGG" id="hin:HI_0899"/>
<dbReference type="PATRIC" id="fig|71421.8.peg.941"/>
<dbReference type="eggNOG" id="COG0262">
    <property type="taxonomic scope" value="Bacteria"/>
</dbReference>
<dbReference type="HOGENOM" id="CLU_043966_5_1_6"/>
<dbReference type="OrthoDB" id="9804315at2"/>
<dbReference type="PhylomeDB" id="P43791"/>
<dbReference type="BioCyc" id="HINF71421:G1GJ1-939-MONOMER"/>
<dbReference type="UniPathway" id="UPA00077">
    <property type="reaction ID" value="UER00158"/>
</dbReference>
<dbReference type="Proteomes" id="UP000000579">
    <property type="component" value="Chromosome"/>
</dbReference>
<dbReference type="GO" id="GO:0005829">
    <property type="term" value="C:cytosol"/>
    <property type="evidence" value="ECO:0000318"/>
    <property type="project" value="GO_Central"/>
</dbReference>
<dbReference type="GO" id="GO:0004146">
    <property type="term" value="F:dihydrofolate reductase activity"/>
    <property type="evidence" value="ECO:0000318"/>
    <property type="project" value="GO_Central"/>
</dbReference>
<dbReference type="GO" id="GO:0050661">
    <property type="term" value="F:NADP binding"/>
    <property type="evidence" value="ECO:0000318"/>
    <property type="project" value="GO_Central"/>
</dbReference>
<dbReference type="GO" id="GO:0046452">
    <property type="term" value="P:dihydrofolate metabolic process"/>
    <property type="evidence" value="ECO:0000318"/>
    <property type="project" value="GO_Central"/>
</dbReference>
<dbReference type="GO" id="GO:0046655">
    <property type="term" value="P:folic acid metabolic process"/>
    <property type="evidence" value="ECO:0000318"/>
    <property type="project" value="GO_Central"/>
</dbReference>
<dbReference type="GO" id="GO:0006730">
    <property type="term" value="P:one-carbon metabolic process"/>
    <property type="evidence" value="ECO:0007669"/>
    <property type="project" value="UniProtKB-KW"/>
</dbReference>
<dbReference type="GO" id="GO:0046677">
    <property type="term" value="P:response to antibiotic"/>
    <property type="evidence" value="ECO:0007669"/>
    <property type="project" value="UniProtKB-KW"/>
</dbReference>
<dbReference type="GO" id="GO:0046654">
    <property type="term" value="P:tetrahydrofolate biosynthetic process"/>
    <property type="evidence" value="ECO:0000318"/>
    <property type="project" value="GO_Central"/>
</dbReference>
<dbReference type="CDD" id="cd00209">
    <property type="entry name" value="DHFR"/>
    <property type="match status" value="1"/>
</dbReference>
<dbReference type="FunFam" id="3.40.430.10:FF:000001">
    <property type="entry name" value="Dihydrofolate reductase"/>
    <property type="match status" value="1"/>
</dbReference>
<dbReference type="Gene3D" id="3.40.430.10">
    <property type="entry name" value="Dihydrofolate Reductase, subunit A"/>
    <property type="match status" value="1"/>
</dbReference>
<dbReference type="InterPro" id="IPR012259">
    <property type="entry name" value="DHFR"/>
</dbReference>
<dbReference type="InterPro" id="IPR024072">
    <property type="entry name" value="DHFR-like_dom_sf"/>
</dbReference>
<dbReference type="InterPro" id="IPR017925">
    <property type="entry name" value="DHFR_CS"/>
</dbReference>
<dbReference type="InterPro" id="IPR001796">
    <property type="entry name" value="DHFR_dom"/>
</dbReference>
<dbReference type="NCBIfam" id="NF008037">
    <property type="entry name" value="PRK10769.1"/>
    <property type="match status" value="1"/>
</dbReference>
<dbReference type="PANTHER" id="PTHR48069">
    <property type="entry name" value="DIHYDROFOLATE REDUCTASE"/>
    <property type="match status" value="1"/>
</dbReference>
<dbReference type="PANTHER" id="PTHR48069:SF3">
    <property type="entry name" value="DIHYDROFOLATE REDUCTASE"/>
    <property type="match status" value="1"/>
</dbReference>
<dbReference type="Pfam" id="PF00186">
    <property type="entry name" value="DHFR_1"/>
    <property type="match status" value="1"/>
</dbReference>
<dbReference type="PIRSF" id="PIRSF000194">
    <property type="entry name" value="DHFR"/>
    <property type="match status" value="1"/>
</dbReference>
<dbReference type="PRINTS" id="PR00070">
    <property type="entry name" value="DHFR"/>
</dbReference>
<dbReference type="SUPFAM" id="SSF53597">
    <property type="entry name" value="Dihydrofolate reductase-like"/>
    <property type="match status" value="1"/>
</dbReference>
<dbReference type="PROSITE" id="PS00075">
    <property type="entry name" value="DHFR_1"/>
    <property type="match status" value="1"/>
</dbReference>
<dbReference type="PROSITE" id="PS51330">
    <property type="entry name" value="DHFR_2"/>
    <property type="match status" value="1"/>
</dbReference>
<feature type="chain" id="PRO_0000186391" description="Dihydrofolate reductase">
    <location>
        <begin position="1"/>
        <end position="160"/>
    </location>
</feature>
<feature type="domain" description="DHFR" evidence="2">
    <location>
        <begin position="2"/>
        <end position="159"/>
    </location>
</feature>
<feature type="binding site" evidence="1">
    <location>
        <position position="6"/>
    </location>
    <ligand>
        <name>substrate</name>
    </ligand>
</feature>
<feature type="binding site" evidence="1">
    <location>
        <position position="8"/>
    </location>
    <ligand>
        <name>NADP(+)</name>
        <dbReference type="ChEBI" id="CHEBI:58349"/>
    </ligand>
</feature>
<feature type="binding site" evidence="1">
    <location>
        <begin position="14"/>
        <end position="20"/>
    </location>
    <ligand>
        <name>NADP(+)</name>
        <dbReference type="ChEBI" id="CHEBI:58349"/>
    </ligand>
</feature>
<feature type="binding site" evidence="1">
    <location>
        <position position="28"/>
    </location>
    <ligand>
        <name>substrate</name>
    </ligand>
</feature>
<feature type="binding site" evidence="1">
    <location>
        <begin position="46"/>
        <end position="47"/>
    </location>
    <ligand>
        <name>NADP(+)</name>
        <dbReference type="ChEBI" id="CHEBI:58349"/>
    </ligand>
</feature>
<feature type="binding site" evidence="1">
    <location>
        <position position="53"/>
    </location>
    <ligand>
        <name>substrate</name>
    </ligand>
</feature>
<feature type="binding site" evidence="1">
    <location>
        <position position="58"/>
    </location>
    <ligand>
        <name>substrate</name>
    </ligand>
</feature>
<feature type="binding site" evidence="1">
    <location>
        <begin position="64"/>
        <end position="65"/>
    </location>
    <ligand>
        <name>NADP(+)</name>
        <dbReference type="ChEBI" id="CHEBI:58349"/>
    </ligand>
</feature>
<feature type="binding site" evidence="1">
    <location>
        <begin position="96"/>
        <end position="103"/>
    </location>
    <ligand>
        <name>NADP(+)</name>
        <dbReference type="ChEBI" id="CHEBI:58349"/>
    </ligand>
</feature>
<feature type="binding site" evidence="1">
    <location>
        <position position="114"/>
    </location>
    <ligand>
        <name>substrate</name>
    </ligand>
</feature>
<feature type="sequence variant" description="In strain: Isolate R1042 and Isolate R1047.">
    <original>N</original>
    <variation>S</variation>
    <location>
        <position position="13"/>
    </location>
</feature>
<feature type="sequence variant" description="In strain: Isolate R1047.">
    <original>M</original>
    <variation>I</variation>
    <location>
        <position position="21"/>
    </location>
</feature>
<feature type="sequence variant" description="In strain: Isolate R1047.">
    <original>P</original>
    <variation>A</variation>
    <location>
        <position position="54"/>
    </location>
</feature>
<feature type="sequence variant" description="In strain: Isolate R906.">
    <original>P</original>
    <variation>A</variation>
    <location>
        <position position="56"/>
    </location>
</feature>
<feature type="sequence variant" description="In strain: Isolate R1042.">
    <original>L</original>
    <variation>P</variation>
    <location>
        <position position="67"/>
    </location>
</feature>
<feature type="sequence variant" description="In strain: Isolate R1042.">
    <original>E</original>
    <variation>K</variation>
    <location>
        <position position="69"/>
    </location>
</feature>
<feature type="sequence variant" description="In strain: Isolate R1042.">
    <original>I</original>
    <variation>V</variation>
    <location>
        <position position="74"/>
    </location>
</feature>
<feature type="sequence variant" description="In strain: Isolate R1042.">
    <original>D</original>
    <variation>N</variation>
    <location>
        <position position="77"/>
    </location>
</feature>
<feature type="sequence variant" description="In strain: Isolate R1042.">
    <original>F</original>
    <variation>L</variation>
    <location>
        <position position="79"/>
    </location>
</feature>
<feature type="sequence variant" description="In strain: Isolate R1047.">
    <original>I</original>
    <variation>L</variation>
    <location>
        <position position="95"/>
    </location>
</feature>
<feature type="sequence variant" description="In strain: Isolate R1042.">
    <original>E</original>
    <variation>K</variation>
    <location>
        <position position="135"/>
    </location>
</feature>
<feature type="sequence variant" description="In strain: Isolate R1042.">
    <original>R</original>
    <variation>H</variation>
    <location>
        <position position="142"/>
    </location>
</feature>
<feature type="sequence variant" description="In strain: Isolate R1042.">
    <original>F</original>
    <variation>S</variation>
    <location>
        <position position="154"/>
    </location>
</feature>
<gene>
    <name type="primary">folA</name>
    <name type="synonym">folH</name>
    <name type="ordered locus">HI_0899</name>
</gene>
<sequence>MTFSLIVATTLNNVIGKDNQMPWHLPADLAWFRQNTTGKPVIMGRKTFESIGRPLPKRTNIVLSRQLFEHEGVIWKDSFESAVNFVRDFDEIMLIGGGELFKQYLPKADKLYLTQIQTELDGDTFFPQLNWEEWEIEFDEYRKADEQNRYDCRFLILTRK</sequence>
<evidence type="ECO:0000250" key="1"/>
<evidence type="ECO:0000255" key="2">
    <source>
        <dbReference type="PROSITE-ProRule" id="PRU00660"/>
    </source>
</evidence>
<evidence type="ECO:0000305" key="3"/>
<reference key="1">
    <citation type="journal article" date="1995" name="Science">
        <title>Whole-genome random sequencing and assembly of Haemophilus influenzae Rd.</title>
        <authorList>
            <person name="Fleischmann R.D."/>
            <person name="Adams M.D."/>
            <person name="White O."/>
            <person name="Clayton R.A."/>
            <person name="Kirkness E.F."/>
            <person name="Kerlavage A.R."/>
            <person name="Bult C.J."/>
            <person name="Tomb J.-F."/>
            <person name="Dougherty B.A."/>
            <person name="Merrick J.M."/>
            <person name="McKenney K."/>
            <person name="Sutton G.G."/>
            <person name="FitzHugh W."/>
            <person name="Fields C.A."/>
            <person name="Gocayne J.D."/>
            <person name="Scott J.D."/>
            <person name="Shirley R."/>
            <person name="Liu L.-I."/>
            <person name="Glodek A."/>
            <person name="Kelley J.M."/>
            <person name="Weidman J.F."/>
            <person name="Phillips C.A."/>
            <person name="Spriggs T."/>
            <person name="Hedblom E."/>
            <person name="Cotton M.D."/>
            <person name="Utterback T.R."/>
            <person name="Hanna M.C."/>
            <person name="Nguyen D.T."/>
            <person name="Saudek D.M."/>
            <person name="Brandon R.C."/>
            <person name="Fine L.D."/>
            <person name="Fritchman J.L."/>
            <person name="Fuhrmann J.L."/>
            <person name="Geoghagen N.S.M."/>
            <person name="Gnehm C.L."/>
            <person name="McDonald L.A."/>
            <person name="Small K.V."/>
            <person name="Fraser C.M."/>
            <person name="Smith H.O."/>
            <person name="Venter J.C."/>
        </authorList>
    </citation>
    <scope>NUCLEOTIDE SEQUENCE [LARGE SCALE GENOMIC DNA]</scope>
    <source>
        <strain>ATCC 51907 / DSM 11121 / KW20 / Rd</strain>
    </source>
</reference>
<reference key="2">
    <citation type="submission" date="1995-02" db="EMBL/GenBank/DDBJ databases">
        <authorList>
            <person name="de Groot R."/>
        </authorList>
    </citation>
    <scope>NUCLEOTIDE SEQUENCE [GENOMIC DNA]</scope>
    <source>
        <strain>Isolate R1042</strain>
        <strain>Isolate R1047</strain>
        <strain>Isolate R906</strain>
    </source>
</reference>
<protein>
    <recommendedName>
        <fullName>Dihydrofolate reductase</fullName>
        <ecNumber>1.5.1.3</ecNumber>
    </recommendedName>
</protein>
<comment type="function">
    <text evidence="1">Key enzyme in folate metabolism. Catalyzes an essential reaction for de novo glycine and purine synthesis, and for DNA precursor synthesis (By similarity).</text>
</comment>
<comment type="catalytic activity">
    <reaction evidence="2">
        <text>(6S)-5,6,7,8-tetrahydrofolate + NADP(+) = 7,8-dihydrofolate + NADPH + H(+)</text>
        <dbReference type="Rhea" id="RHEA:15009"/>
        <dbReference type="ChEBI" id="CHEBI:15378"/>
        <dbReference type="ChEBI" id="CHEBI:57451"/>
        <dbReference type="ChEBI" id="CHEBI:57453"/>
        <dbReference type="ChEBI" id="CHEBI:57783"/>
        <dbReference type="ChEBI" id="CHEBI:58349"/>
        <dbReference type="EC" id="1.5.1.3"/>
    </reaction>
</comment>
<comment type="pathway">
    <text>Cofactor biosynthesis; tetrahydrofolate biosynthesis; 5,6,7,8-tetrahydrofolate from 7,8-dihydrofolate: step 1/1.</text>
</comment>
<comment type="miscellaneous">
    <text>Isolates R906, R1042, and R1047 are trimethoprim-resistant.</text>
</comment>
<comment type="similarity">
    <text evidence="3">Belongs to the dihydrofolate reductase family.</text>
</comment>
<accession>P43791</accession>
<name>DYR_HAEIN</name>
<keyword id="KW-0046">Antibiotic resistance</keyword>
<keyword id="KW-0521">NADP</keyword>
<keyword id="KW-0554">One-carbon metabolism</keyword>
<keyword id="KW-0560">Oxidoreductase</keyword>
<keyword id="KW-1185">Reference proteome</keyword>
<keyword id="KW-0817">Trimethoprim resistance</keyword>